<feature type="chain" id="PRO_1000051384" description="Asparagine--tRNA ligase">
    <location>
        <begin position="1"/>
        <end position="463"/>
    </location>
</feature>
<protein>
    <recommendedName>
        <fullName evidence="1">Asparagine--tRNA ligase</fullName>
        <ecNumber evidence="1">6.1.1.22</ecNumber>
    </recommendedName>
    <alternativeName>
        <fullName evidence="1">Asparaginyl-tRNA synthetase</fullName>
        <shortName evidence="1">AsnRS</shortName>
    </alternativeName>
</protein>
<proteinExistence type="inferred from homology"/>
<name>SYN_CLOBH</name>
<organism>
    <name type="scientific">Clostridium botulinum (strain Hall / ATCC 3502 / NCTC 13319 / Type A)</name>
    <dbReference type="NCBI Taxonomy" id="441771"/>
    <lineage>
        <taxon>Bacteria</taxon>
        <taxon>Bacillati</taxon>
        <taxon>Bacillota</taxon>
        <taxon>Clostridia</taxon>
        <taxon>Eubacteriales</taxon>
        <taxon>Clostridiaceae</taxon>
        <taxon>Clostridium</taxon>
    </lineage>
</organism>
<accession>A5HZE1</accession>
<accession>A7G197</accession>
<comment type="catalytic activity">
    <reaction evidence="1">
        <text>tRNA(Asn) + L-asparagine + ATP = L-asparaginyl-tRNA(Asn) + AMP + diphosphate + H(+)</text>
        <dbReference type="Rhea" id="RHEA:11180"/>
        <dbReference type="Rhea" id="RHEA-COMP:9659"/>
        <dbReference type="Rhea" id="RHEA-COMP:9674"/>
        <dbReference type="ChEBI" id="CHEBI:15378"/>
        <dbReference type="ChEBI" id="CHEBI:30616"/>
        <dbReference type="ChEBI" id="CHEBI:33019"/>
        <dbReference type="ChEBI" id="CHEBI:58048"/>
        <dbReference type="ChEBI" id="CHEBI:78442"/>
        <dbReference type="ChEBI" id="CHEBI:78515"/>
        <dbReference type="ChEBI" id="CHEBI:456215"/>
        <dbReference type="EC" id="6.1.1.22"/>
    </reaction>
</comment>
<comment type="subunit">
    <text evidence="1">Homodimer.</text>
</comment>
<comment type="subcellular location">
    <subcellularLocation>
        <location evidence="1">Cytoplasm</location>
    </subcellularLocation>
</comment>
<comment type="similarity">
    <text evidence="1">Belongs to the class-II aminoacyl-tRNA synthetase family.</text>
</comment>
<gene>
    <name evidence="1" type="primary">asnS</name>
    <name type="ordered locus">CBO0597</name>
    <name type="ordered locus">CLC_0651</name>
</gene>
<evidence type="ECO:0000255" key="1">
    <source>
        <dbReference type="HAMAP-Rule" id="MF_00534"/>
    </source>
</evidence>
<dbReference type="EC" id="6.1.1.22" evidence="1"/>
<dbReference type="EMBL" id="CP000727">
    <property type="protein sequence ID" value="ABS36590.1"/>
    <property type="molecule type" value="Genomic_DNA"/>
</dbReference>
<dbReference type="EMBL" id="AM412317">
    <property type="protein sequence ID" value="CAL82150.1"/>
    <property type="molecule type" value="Genomic_DNA"/>
</dbReference>
<dbReference type="RefSeq" id="WP_011948326.1">
    <property type="nucleotide sequence ID" value="NC_009698.1"/>
</dbReference>
<dbReference type="RefSeq" id="YP_001253139.1">
    <property type="nucleotide sequence ID" value="NC_009495.1"/>
</dbReference>
<dbReference type="RefSeq" id="YP_001386531.1">
    <property type="nucleotide sequence ID" value="NC_009698.1"/>
</dbReference>
<dbReference type="SMR" id="A5HZE1"/>
<dbReference type="GeneID" id="5184852"/>
<dbReference type="KEGG" id="cbh:CLC_0651"/>
<dbReference type="KEGG" id="cbo:CBO0597"/>
<dbReference type="PATRIC" id="fig|413999.7.peg.596"/>
<dbReference type="HOGENOM" id="CLU_004553_2_0_9"/>
<dbReference type="PRO" id="PR:A5HZE1"/>
<dbReference type="Proteomes" id="UP000001986">
    <property type="component" value="Chromosome"/>
</dbReference>
<dbReference type="GO" id="GO:0005737">
    <property type="term" value="C:cytoplasm"/>
    <property type="evidence" value="ECO:0007669"/>
    <property type="project" value="UniProtKB-SubCell"/>
</dbReference>
<dbReference type="GO" id="GO:0004816">
    <property type="term" value="F:asparagine-tRNA ligase activity"/>
    <property type="evidence" value="ECO:0007669"/>
    <property type="project" value="UniProtKB-UniRule"/>
</dbReference>
<dbReference type="GO" id="GO:0005524">
    <property type="term" value="F:ATP binding"/>
    <property type="evidence" value="ECO:0007669"/>
    <property type="project" value="UniProtKB-UniRule"/>
</dbReference>
<dbReference type="GO" id="GO:0140096">
    <property type="term" value="F:catalytic activity, acting on a protein"/>
    <property type="evidence" value="ECO:0007669"/>
    <property type="project" value="UniProtKB-ARBA"/>
</dbReference>
<dbReference type="GO" id="GO:0003676">
    <property type="term" value="F:nucleic acid binding"/>
    <property type="evidence" value="ECO:0007669"/>
    <property type="project" value="InterPro"/>
</dbReference>
<dbReference type="GO" id="GO:0016740">
    <property type="term" value="F:transferase activity"/>
    <property type="evidence" value="ECO:0007669"/>
    <property type="project" value="UniProtKB-ARBA"/>
</dbReference>
<dbReference type="GO" id="GO:0006421">
    <property type="term" value="P:asparaginyl-tRNA aminoacylation"/>
    <property type="evidence" value="ECO:0000318"/>
    <property type="project" value="GO_Central"/>
</dbReference>
<dbReference type="CDD" id="cd00776">
    <property type="entry name" value="AsxRS_core"/>
    <property type="match status" value="1"/>
</dbReference>
<dbReference type="CDD" id="cd04318">
    <property type="entry name" value="EcAsnRS_like_N"/>
    <property type="match status" value="1"/>
</dbReference>
<dbReference type="FunFam" id="3.30.930.10:FF:000016">
    <property type="entry name" value="Asparagine--tRNA ligase"/>
    <property type="match status" value="1"/>
</dbReference>
<dbReference type="Gene3D" id="3.30.930.10">
    <property type="entry name" value="Bira Bifunctional Protein, Domain 2"/>
    <property type="match status" value="1"/>
</dbReference>
<dbReference type="Gene3D" id="2.40.50.140">
    <property type="entry name" value="Nucleic acid-binding proteins"/>
    <property type="match status" value="1"/>
</dbReference>
<dbReference type="HAMAP" id="MF_00534">
    <property type="entry name" value="Asn_tRNA_synth"/>
    <property type="match status" value="1"/>
</dbReference>
<dbReference type="InterPro" id="IPR004364">
    <property type="entry name" value="Aa-tRNA-synt_II"/>
</dbReference>
<dbReference type="InterPro" id="IPR006195">
    <property type="entry name" value="aa-tRNA-synth_II"/>
</dbReference>
<dbReference type="InterPro" id="IPR045864">
    <property type="entry name" value="aa-tRNA-synth_II/BPL/LPL"/>
</dbReference>
<dbReference type="InterPro" id="IPR004522">
    <property type="entry name" value="Asn-tRNA-ligase"/>
</dbReference>
<dbReference type="InterPro" id="IPR002312">
    <property type="entry name" value="Asp/Asn-tRNA-synth_IIb"/>
</dbReference>
<dbReference type="InterPro" id="IPR012340">
    <property type="entry name" value="NA-bd_OB-fold"/>
</dbReference>
<dbReference type="InterPro" id="IPR004365">
    <property type="entry name" value="NA-bd_OB_tRNA"/>
</dbReference>
<dbReference type="NCBIfam" id="TIGR00457">
    <property type="entry name" value="asnS"/>
    <property type="match status" value="1"/>
</dbReference>
<dbReference type="NCBIfam" id="NF003037">
    <property type="entry name" value="PRK03932.1"/>
    <property type="match status" value="1"/>
</dbReference>
<dbReference type="PANTHER" id="PTHR22594:SF34">
    <property type="entry name" value="ASPARAGINE--TRNA LIGASE, MITOCHONDRIAL-RELATED"/>
    <property type="match status" value="1"/>
</dbReference>
<dbReference type="PANTHER" id="PTHR22594">
    <property type="entry name" value="ASPARTYL/LYSYL-TRNA SYNTHETASE"/>
    <property type="match status" value="1"/>
</dbReference>
<dbReference type="Pfam" id="PF00152">
    <property type="entry name" value="tRNA-synt_2"/>
    <property type="match status" value="1"/>
</dbReference>
<dbReference type="Pfam" id="PF01336">
    <property type="entry name" value="tRNA_anti-codon"/>
    <property type="match status" value="1"/>
</dbReference>
<dbReference type="PRINTS" id="PR01042">
    <property type="entry name" value="TRNASYNTHASP"/>
</dbReference>
<dbReference type="SUPFAM" id="SSF55681">
    <property type="entry name" value="Class II aaRS and biotin synthetases"/>
    <property type="match status" value="1"/>
</dbReference>
<dbReference type="SUPFAM" id="SSF50249">
    <property type="entry name" value="Nucleic acid-binding proteins"/>
    <property type="match status" value="1"/>
</dbReference>
<dbReference type="PROSITE" id="PS50862">
    <property type="entry name" value="AA_TRNA_LIGASE_II"/>
    <property type="match status" value="1"/>
</dbReference>
<reference key="1">
    <citation type="journal article" date="2007" name="Genome Res.">
        <title>Genome sequence of a proteolytic (Group I) Clostridium botulinum strain Hall A and comparative analysis of the clostridial genomes.</title>
        <authorList>
            <person name="Sebaihia M."/>
            <person name="Peck M.W."/>
            <person name="Minton N.P."/>
            <person name="Thomson N.R."/>
            <person name="Holden M.T.G."/>
            <person name="Mitchell W.J."/>
            <person name="Carter A.T."/>
            <person name="Bentley S.D."/>
            <person name="Mason D.R."/>
            <person name="Crossman L."/>
            <person name="Paul C.J."/>
            <person name="Ivens A."/>
            <person name="Wells-Bennik M.H.J."/>
            <person name="Davis I.J."/>
            <person name="Cerdeno-Tarraga A.M."/>
            <person name="Churcher C."/>
            <person name="Quail M.A."/>
            <person name="Chillingworth T."/>
            <person name="Feltwell T."/>
            <person name="Fraser A."/>
            <person name="Goodhead I."/>
            <person name="Hance Z."/>
            <person name="Jagels K."/>
            <person name="Larke N."/>
            <person name="Maddison M."/>
            <person name="Moule S."/>
            <person name="Mungall K."/>
            <person name="Norbertczak H."/>
            <person name="Rabbinowitsch E."/>
            <person name="Sanders M."/>
            <person name="Simmonds M."/>
            <person name="White B."/>
            <person name="Whithead S."/>
            <person name="Parkhill J."/>
        </authorList>
    </citation>
    <scope>NUCLEOTIDE SEQUENCE [LARGE SCALE GENOMIC DNA]</scope>
    <source>
        <strain>Hall / ATCC 3502 / NCTC 13319 / Type A</strain>
    </source>
</reference>
<reference key="2">
    <citation type="journal article" date="2007" name="PLoS ONE">
        <title>Analysis of the neurotoxin complex genes in Clostridium botulinum A1-A4 and B1 strains: BoNT/A3, /Ba4 and /B1 clusters are located within plasmids.</title>
        <authorList>
            <person name="Smith T.J."/>
            <person name="Hill K.K."/>
            <person name="Foley B.T."/>
            <person name="Detter J.C."/>
            <person name="Munk A.C."/>
            <person name="Bruce D.C."/>
            <person name="Doggett N.A."/>
            <person name="Smith L.A."/>
            <person name="Marks J.D."/>
            <person name="Xie G."/>
            <person name="Brettin T.S."/>
        </authorList>
    </citation>
    <scope>NUCLEOTIDE SEQUENCE [LARGE SCALE GENOMIC DNA]</scope>
    <source>
        <strain>Hall / ATCC 3502 / NCTC 13319 / Type A</strain>
    </source>
</reference>
<sequence>MDITLVKSLYRETEKHMDKEVKINGWVRTVRDSKNFAFVEVNDGSFFKNVQVILESSLENFKELCKMPISTSVEVEGIVQPTPNAKQPFEIKATRISIEGKSSTDYPLQKKRHTFEYLRTIAHLRPRSNAFSAVFRVRSLAAYAVHKFFQERGFVYTNTPIITGSDCEGAGEMFQLTTMDLNNIPKTEEGKIDFSKDFFGSPANLTVSGQLSAETFALAFRNVYTFGPTFRAENSNTARHASEFWMIEPEMAFAELTDYLDNAEDMVKFVINYVMENAPEEMAFFNSFVDKGLFDRLDNVVNSDFKRITYTEAVELLQKSGVKFDYEVEWGIDLQTEHERYLTEQIFKKPVFVTDYPKDIKAFYMRLNDDGKTVAAADLLVPGVGEIIGGSQREERLDVLEKRMEELNLNKEDYWWYLELRKYGETKHSGYGLGFERILMYITGMTNIRDVIPFPRTPGSAEF</sequence>
<keyword id="KW-0030">Aminoacyl-tRNA synthetase</keyword>
<keyword id="KW-0067">ATP-binding</keyword>
<keyword id="KW-0963">Cytoplasm</keyword>
<keyword id="KW-0436">Ligase</keyword>
<keyword id="KW-0547">Nucleotide-binding</keyword>
<keyword id="KW-0648">Protein biosynthesis</keyword>
<keyword id="KW-1185">Reference proteome</keyword>